<name>LPXD_RALN1</name>
<proteinExistence type="inferred from homology"/>
<accession>Q8XZI1</accession>
<keyword id="KW-0012">Acyltransferase</keyword>
<keyword id="KW-0441">Lipid A biosynthesis</keyword>
<keyword id="KW-0444">Lipid biosynthesis</keyword>
<keyword id="KW-0443">Lipid metabolism</keyword>
<keyword id="KW-1185">Reference proteome</keyword>
<keyword id="KW-0677">Repeat</keyword>
<keyword id="KW-0808">Transferase</keyword>
<comment type="function">
    <text evidence="1">Catalyzes the N-acylation of UDP-3-O-acylglucosamine using 3-hydroxyacyl-ACP as the acyl donor. Is involved in the biosynthesis of lipid A, a phosphorylated glycolipid that anchors the lipopolysaccharide to the outer membrane of the cell.</text>
</comment>
<comment type="catalytic activity">
    <reaction evidence="1">
        <text>a UDP-3-O-[(3R)-3-hydroxyacyl]-alpha-D-glucosamine + a (3R)-hydroxyacyl-[ACP] = a UDP-2-N,3-O-bis[(3R)-3-hydroxyacyl]-alpha-D-glucosamine + holo-[ACP] + H(+)</text>
        <dbReference type="Rhea" id="RHEA:53836"/>
        <dbReference type="Rhea" id="RHEA-COMP:9685"/>
        <dbReference type="Rhea" id="RHEA-COMP:9945"/>
        <dbReference type="ChEBI" id="CHEBI:15378"/>
        <dbReference type="ChEBI" id="CHEBI:64479"/>
        <dbReference type="ChEBI" id="CHEBI:78827"/>
        <dbReference type="ChEBI" id="CHEBI:137740"/>
        <dbReference type="ChEBI" id="CHEBI:137748"/>
        <dbReference type="EC" id="2.3.1.191"/>
    </reaction>
</comment>
<comment type="pathway">
    <text evidence="1">Bacterial outer membrane biogenesis; LPS lipid A biosynthesis.</text>
</comment>
<comment type="subunit">
    <text evidence="1">Homotrimer.</text>
</comment>
<comment type="similarity">
    <text evidence="1">Belongs to the transferase hexapeptide repeat family. LpxD subfamily.</text>
</comment>
<organism>
    <name type="scientific">Ralstonia nicotianae (strain ATCC BAA-1114 / GMI1000)</name>
    <name type="common">Ralstonia solanacearum</name>
    <dbReference type="NCBI Taxonomy" id="267608"/>
    <lineage>
        <taxon>Bacteria</taxon>
        <taxon>Pseudomonadati</taxon>
        <taxon>Pseudomonadota</taxon>
        <taxon>Betaproteobacteria</taxon>
        <taxon>Burkholderiales</taxon>
        <taxon>Burkholderiaceae</taxon>
        <taxon>Ralstonia</taxon>
        <taxon>Ralstonia solanacearum species complex</taxon>
    </lineage>
</organism>
<protein>
    <recommendedName>
        <fullName evidence="1">UDP-3-O-acylglucosamine N-acyltransferase</fullName>
        <ecNumber evidence="1">2.3.1.191</ecNumber>
    </recommendedName>
</protein>
<dbReference type="EC" id="2.3.1.191" evidence="1"/>
<dbReference type="EMBL" id="AL646052">
    <property type="protein sequence ID" value="CAD15116.1"/>
    <property type="molecule type" value="Genomic_DNA"/>
</dbReference>
<dbReference type="RefSeq" id="WP_011001363.1">
    <property type="nucleotide sequence ID" value="NC_003295.1"/>
</dbReference>
<dbReference type="SMR" id="Q8XZI1"/>
<dbReference type="STRING" id="267608.RSc1414"/>
<dbReference type="EnsemblBacteria" id="CAD15116">
    <property type="protein sequence ID" value="CAD15116"/>
    <property type="gene ID" value="RSc1414"/>
</dbReference>
<dbReference type="KEGG" id="rso:RSc1414"/>
<dbReference type="eggNOG" id="COG1044">
    <property type="taxonomic scope" value="Bacteria"/>
</dbReference>
<dbReference type="HOGENOM" id="CLU_049865_0_1_4"/>
<dbReference type="UniPathway" id="UPA00973"/>
<dbReference type="Proteomes" id="UP000001436">
    <property type="component" value="Chromosome"/>
</dbReference>
<dbReference type="GO" id="GO:0016020">
    <property type="term" value="C:membrane"/>
    <property type="evidence" value="ECO:0007669"/>
    <property type="project" value="GOC"/>
</dbReference>
<dbReference type="GO" id="GO:0016410">
    <property type="term" value="F:N-acyltransferase activity"/>
    <property type="evidence" value="ECO:0007669"/>
    <property type="project" value="InterPro"/>
</dbReference>
<dbReference type="GO" id="GO:0009245">
    <property type="term" value="P:lipid A biosynthetic process"/>
    <property type="evidence" value="ECO:0007669"/>
    <property type="project" value="UniProtKB-UniRule"/>
</dbReference>
<dbReference type="CDD" id="cd03352">
    <property type="entry name" value="LbH_LpxD"/>
    <property type="match status" value="1"/>
</dbReference>
<dbReference type="Gene3D" id="2.160.10.10">
    <property type="entry name" value="Hexapeptide repeat proteins"/>
    <property type="match status" value="1"/>
</dbReference>
<dbReference type="Gene3D" id="3.40.1390.10">
    <property type="entry name" value="MurE/MurF, N-terminal domain"/>
    <property type="match status" value="1"/>
</dbReference>
<dbReference type="HAMAP" id="MF_00523">
    <property type="entry name" value="LpxD"/>
    <property type="match status" value="1"/>
</dbReference>
<dbReference type="InterPro" id="IPR001451">
    <property type="entry name" value="Hexapep"/>
</dbReference>
<dbReference type="InterPro" id="IPR018357">
    <property type="entry name" value="Hexapep_transf_CS"/>
</dbReference>
<dbReference type="InterPro" id="IPR007691">
    <property type="entry name" value="LpxD"/>
</dbReference>
<dbReference type="InterPro" id="IPR011004">
    <property type="entry name" value="Trimer_LpxA-like_sf"/>
</dbReference>
<dbReference type="InterPro" id="IPR020573">
    <property type="entry name" value="UDP_GlcNAc_AcTrfase_non-rep"/>
</dbReference>
<dbReference type="NCBIfam" id="TIGR01853">
    <property type="entry name" value="lipid_A_lpxD"/>
    <property type="match status" value="1"/>
</dbReference>
<dbReference type="NCBIfam" id="NF002060">
    <property type="entry name" value="PRK00892.1"/>
    <property type="match status" value="1"/>
</dbReference>
<dbReference type="PANTHER" id="PTHR43378">
    <property type="entry name" value="UDP-3-O-ACYLGLUCOSAMINE N-ACYLTRANSFERASE"/>
    <property type="match status" value="1"/>
</dbReference>
<dbReference type="PANTHER" id="PTHR43378:SF2">
    <property type="entry name" value="UDP-3-O-ACYLGLUCOSAMINE N-ACYLTRANSFERASE 1, MITOCHONDRIAL-RELATED"/>
    <property type="match status" value="1"/>
</dbReference>
<dbReference type="Pfam" id="PF00132">
    <property type="entry name" value="Hexapep"/>
    <property type="match status" value="2"/>
</dbReference>
<dbReference type="Pfam" id="PF04613">
    <property type="entry name" value="LpxD"/>
    <property type="match status" value="1"/>
</dbReference>
<dbReference type="SUPFAM" id="SSF51161">
    <property type="entry name" value="Trimeric LpxA-like enzymes"/>
    <property type="match status" value="1"/>
</dbReference>
<dbReference type="PROSITE" id="PS00101">
    <property type="entry name" value="HEXAPEP_TRANSFERASES"/>
    <property type="match status" value="1"/>
</dbReference>
<evidence type="ECO:0000255" key="1">
    <source>
        <dbReference type="HAMAP-Rule" id="MF_00523"/>
    </source>
</evidence>
<gene>
    <name evidence="1" type="primary">lpxD</name>
    <name type="ordered locus">RSc1414</name>
    <name type="ORF">RS05278</name>
</gene>
<sequence>MSFSLDELAASLGATVQGDAGLIVKSIAPLDQAGADQLAFLSNPLYLNQAVTSGAGAIIVSPRDLETLTAEGHAAGRNWLVAANPYAAFARIAQRFAALGARPAAAGIHPSASVGEGAVVPASCSIGPNVTIEAGAVLGERVRIAGNSFIGADAQVGDDTLLYANVSIYHGCVVGARCILHSGVVIGADGFGFAPDFGPQGGEWVKIPQTGRAIVGDDVEIGANTAIDRGAMADTVVEQGCKIDNQVQIAHNVHVGAYTVIAGCAAISGSTKIGRYCIIGGAANFAGHLTIADRVTVSGGTSITKSIPKPGHFTSVFPFMPHADWERNAAILRGLTRMRERLQQLEQQVKHLQQSS</sequence>
<reference key="1">
    <citation type="journal article" date="2002" name="Nature">
        <title>Genome sequence of the plant pathogen Ralstonia solanacearum.</title>
        <authorList>
            <person name="Salanoubat M."/>
            <person name="Genin S."/>
            <person name="Artiguenave F."/>
            <person name="Gouzy J."/>
            <person name="Mangenot S."/>
            <person name="Arlat M."/>
            <person name="Billault A."/>
            <person name="Brottier P."/>
            <person name="Camus J.-C."/>
            <person name="Cattolico L."/>
            <person name="Chandler M."/>
            <person name="Choisne N."/>
            <person name="Claudel-Renard C."/>
            <person name="Cunnac S."/>
            <person name="Demange N."/>
            <person name="Gaspin C."/>
            <person name="Lavie M."/>
            <person name="Moisan A."/>
            <person name="Robert C."/>
            <person name="Saurin W."/>
            <person name="Schiex T."/>
            <person name="Siguier P."/>
            <person name="Thebault P."/>
            <person name="Whalen M."/>
            <person name="Wincker P."/>
            <person name="Levy M."/>
            <person name="Weissenbach J."/>
            <person name="Boucher C.A."/>
        </authorList>
    </citation>
    <scope>NUCLEOTIDE SEQUENCE [LARGE SCALE GENOMIC DNA]</scope>
    <source>
        <strain>ATCC BAA-1114 / GMI1000</strain>
    </source>
</reference>
<feature type="chain" id="PRO_0000059693" description="UDP-3-O-acylglucosamine N-acyltransferase">
    <location>
        <begin position="1"/>
        <end position="356"/>
    </location>
</feature>
<feature type="active site" description="Proton acceptor" evidence="1">
    <location>
        <position position="251"/>
    </location>
</feature>